<protein>
    <recommendedName>
        <fullName evidence="2">Ornithine carbamoyltransferase</fullName>
        <shortName evidence="2">OTCase</shortName>
        <ecNumber evidence="2">2.1.3.3</ecNumber>
    </recommendedName>
</protein>
<sequence>MNHFLDIHKTDTAELRQMMDSAHAMKAARKGRPKGQLDEDQPLAGRMVALIFEKPSTRTRVSFDVGVRQMGGQTMVLSGKEMQLGHGETIADTARVLSRYVDLIMIRTFEEATLLEMAEHATVPVINGLTNRTHPCQIMADVMTYEEHRGPIAGRKVVWAGDGNNVCASFLHAAGQFGFDFTFTGPSTLDPEAEFVGYAREKGRRVSIERDPAKAVAGADLVVTDTWVSMHDPQSARERRHNQLRPYQVNEALMAQAKPDALFMHCLPAHRDDEATSAVMDGPHSVIFDEAENRLHAQKAIMRWCLGL</sequence>
<organism>
    <name type="scientific">Cereibacter sphaeroides (strain ATCC 17029 / ATH 2.4.9)</name>
    <name type="common">Rhodobacter sphaeroides</name>
    <dbReference type="NCBI Taxonomy" id="349101"/>
    <lineage>
        <taxon>Bacteria</taxon>
        <taxon>Pseudomonadati</taxon>
        <taxon>Pseudomonadota</taxon>
        <taxon>Alphaproteobacteria</taxon>
        <taxon>Rhodobacterales</taxon>
        <taxon>Paracoccaceae</taxon>
        <taxon>Cereibacter</taxon>
    </lineage>
</organism>
<keyword id="KW-0028">Amino-acid biosynthesis</keyword>
<keyword id="KW-0055">Arginine biosynthesis</keyword>
<keyword id="KW-0963">Cytoplasm</keyword>
<keyword id="KW-0808">Transferase</keyword>
<reference key="1">
    <citation type="submission" date="2007-02" db="EMBL/GenBank/DDBJ databases">
        <title>Complete sequence of chromosome 1 of Rhodobacter sphaeroides ATCC 17029.</title>
        <authorList>
            <person name="Copeland A."/>
            <person name="Lucas S."/>
            <person name="Lapidus A."/>
            <person name="Barry K."/>
            <person name="Detter J.C."/>
            <person name="Glavina del Rio T."/>
            <person name="Hammon N."/>
            <person name="Israni S."/>
            <person name="Dalin E."/>
            <person name="Tice H."/>
            <person name="Pitluck S."/>
            <person name="Kiss H."/>
            <person name="Brettin T."/>
            <person name="Bruce D."/>
            <person name="Han C."/>
            <person name="Tapia R."/>
            <person name="Gilna P."/>
            <person name="Schmutz J."/>
            <person name="Larimer F."/>
            <person name="Land M."/>
            <person name="Hauser L."/>
            <person name="Kyrpides N."/>
            <person name="Mikhailova N."/>
            <person name="Richardson P."/>
            <person name="Mackenzie C."/>
            <person name="Choudhary M."/>
            <person name="Donohue T.J."/>
            <person name="Kaplan S."/>
        </authorList>
    </citation>
    <scope>NUCLEOTIDE SEQUENCE [LARGE SCALE GENOMIC DNA]</scope>
    <source>
        <strain>ATCC 17029 / ATH 2.4.9</strain>
    </source>
</reference>
<dbReference type="EC" id="2.1.3.3" evidence="2"/>
<dbReference type="EMBL" id="CP000577">
    <property type="protein sequence ID" value="ABN75832.1"/>
    <property type="molecule type" value="Genomic_DNA"/>
</dbReference>
<dbReference type="RefSeq" id="WP_002719162.1">
    <property type="nucleotide sequence ID" value="NC_009049.1"/>
</dbReference>
<dbReference type="SMR" id="A3PHL6"/>
<dbReference type="KEGG" id="rsh:Rsph17029_0719"/>
<dbReference type="HOGENOM" id="CLU_043846_3_2_5"/>
<dbReference type="UniPathway" id="UPA00068">
    <property type="reaction ID" value="UER00112"/>
</dbReference>
<dbReference type="GO" id="GO:0005737">
    <property type="term" value="C:cytoplasm"/>
    <property type="evidence" value="ECO:0007669"/>
    <property type="project" value="UniProtKB-SubCell"/>
</dbReference>
<dbReference type="GO" id="GO:0016597">
    <property type="term" value="F:amino acid binding"/>
    <property type="evidence" value="ECO:0007669"/>
    <property type="project" value="InterPro"/>
</dbReference>
<dbReference type="GO" id="GO:0004585">
    <property type="term" value="F:ornithine carbamoyltransferase activity"/>
    <property type="evidence" value="ECO:0007669"/>
    <property type="project" value="UniProtKB-UniRule"/>
</dbReference>
<dbReference type="GO" id="GO:0042450">
    <property type="term" value="P:arginine biosynthetic process via ornithine"/>
    <property type="evidence" value="ECO:0007669"/>
    <property type="project" value="TreeGrafter"/>
</dbReference>
<dbReference type="GO" id="GO:0019240">
    <property type="term" value="P:citrulline biosynthetic process"/>
    <property type="evidence" value="ECO:0007669"/>
    <property type="project" value="TreeGrafter"/>
</dbReference>
<dbReference type="GO" id="GO:0006526">
    <property type="term" value="P:L-arginine biosynthetic process"/>
    <property type="evidence" value="ECO:0007669"/>
    <property type="project" value="UniProtKB-UniPathway"/>
</dbReference>
<dbReference type="FunFam" id="3.40.50.1370:FF:000008">
    <property type="entry name" value="Ornithine carbamoyltransferase"/>
    <property type="match status" value="1"/>
</dbReference>
<dbReference type="Gene3D" id="3.40.50.1370">
    <property type="entry name" value="Aspartate/ornithine carbamoyltransferase"/>
    <property type="match status" value="2"/>
</dbReference>
<dbReference type="HAMAP" id="MF_01109">
    <property type="entry name" value="OTCase"/>
    <property type="match status" value="1"/>
</dbReference>
<dbReference type="InterPro" id="IPR006132">
    <property type="entry name" value="Asp/Orn_carbamoyltranf_P-bd"/>
</dbReference>
<dbReference type="InterPro" id="IPR006130">
    <property type="entry name" value="Asp/Orn_carbamoylTrfase"/>
</dbReference>
<dbReference type="InterPro" id="IPR036901">
    <property type="entry name" value="Asp/Orn_carbamoylTrfase_sf"/>
</dbReference>
<dbReference type="InterPro" id="IPR006131">
    <property type="entry name" value="Asp_carbamoyltransf_Asp/Orn-bd"/>
</dbReference>
<dbReference type="InterPro" id="IPR002292">
    <property type="entry name" value="Orn/put_carbamltrans"/>
</dbReference>
<dbReference type="InterPro" id="IPR024904">
    <property type="entry name" value="OTCase_ArgI"/>
</dbReference>
<dbReference type="NCBIfam" id="TIGR00658">
    <property type="entry name" value="orni_carb_tr"/>
    <property type="match status" value="1"/>
</dbReference>
<dbReference type="NCBIfam" id="NF001986">
    <property type="entry name" value="PRK00779.1"/>
    <property type="match status" value="1"/>
</dbReference>
<dbReference type="PANTHER" id="PTHR45753">
    <property type="entry name" value="ORNITHINE CARBAMOYLTRANSFERASE, MITOCHONDRIAL"/>
    <property type="match status" value="1"/>
</dbReference>
<dbReference type="PANTHER" id="PTHR45753:SF3">
    <property type="entry name" value="ORNITHINE TRANSCARBAMYLASE, MITOCHONDRIAL"/>
    <property type="match status" value="1"/>
</dbReference>
<dbReference type="Pfam" id="PF00185">
    <property type="entry name" value="OTCace"/>
    <property type="match status" value="1"/>
</dbReference>
<dbReference type="Pfam" id="PF02729">
    <property type="entry name" value="OTCace_N"/>
    <property type="match status" value="1"/>
</dbReference>
<dbReference type="PRINTS" id="PR00100">
    <property type="entry name" value="AOTCASE"/>
</dbReference>
<dbReference type="PRINTS" id="PR00102">
    <property type="entry name" value="OTCASE"/>
</dbReference>
<dbReference type="SUPFAM" id="SSF53671">
    <property type="entry name" value="Aspartate/ornithine carbamoyltransferase"/>
    <property type="match status" value="1"/>
</dbReference>
<dbReference type="PROSITE" id="PS00097">
    <property type="entry name" value="CARBAMOYLTRANSFERASE"/>
    <property type="match status" value="1"/>
</dbReference>
<gene>
    <name evidence="2" type="primary">argF</name>
    <name type="ordered locus">Rsph17029_0719</name>
</gene>
<evidence type="ECO:0000250" key="1"/>
<evidence type="ECO:0000255" key="2">
    <source>
        <dbReference type="HAMAP-Rule" id="MF_01109"/>
    </source>
</evidence>
<comment type="function">
    <text evidence="1">Reversibly catalyzes the transfer of the carbamoyl group from carbamoyl phosphate (CP) to the N(epsilon) atom of ornithine (ORN) to produce L-citrulline.</text>
</comment>
<comment type="catalytic activity">
    <reaction evidence="2">
        <text>carbamoyl phosphate + L-ornithine = L-citrulline + phosphate + H(+)</text>
        <dbReference type="Rhea" id="RHEA:19513"/>
        <dbReference type="ChEBI" id="CHEBI:15378"/>
        <dbReference type="ChEBI" id="CHEBI:43474"/>
        <dbReference type="ChEBI" id="CHEBI:46911"/>
        <dbReference type="ChEBI" id="CHEBI:57743"/>
        <dbReference type="ChEBI" id="CHEBI:58228"/>
        <dbReference type="EC" id="2.1.3.3"/>
    </reaction>
</comment>
<comment type="pathway">
    <text evidence="2">Amino-acid biosynthesis; L-arginine biosynthesis; L-arginine from L-ornithine and carbamoyl phosphate: step 1/3.</text>
</comment>
<comment type="subcellular location">
    <subcellularLocation>
        <location evidence="2">Cytoplasm</location>
    </subcellularLocation>
</comment>
<comment type="similarity">
    <text evidence="2">Belongs to the aspartate/ornithine carbamoyltransferase superfamily. OTCase family.</text>
</comment>
<name>OTC_CERS1</name>
<proteinExistence type="inferred from homology"/>
<feature type="chain" id="PRO_1000163977" description="Ornithine carbamoyltransferase">
    <location>
        <begin position="1"/>
        <end position="308"/>
    </location>
</feature>
<feature type="binding site" evidence="2">
    <location>
        <begin position="56"/>
        <end position="59"/>
    </location>
    <ligand>
        <name>carbamoyl phosphate</name>
        <dbReference type="ChEBI" id="CHEBI:58228"/>
    </ligand>
</feature>
<feature type="binding site" evidence="2">
    <location>
        <position position="83"/>
    </location>
    <ligand>
        <name>carbamoyl phosphate</name>
        <dbReference type="ChEBI" id="CHEBI:58228"/>
    </ligand>
</feature>
<feature type="binding site" evidence="2">
    <location>
        <position position="107"/>
    </location>
    <ligand>
        <name>carbamoyl phosphate</name>
        <dbReference type="ChEBI" id="CHEBI:58228"/>
    </ligand>
</feature>
<feature type="binding site" evidence="2">
    <location>
        <begin position="134"/>
        <end position="137"/>
    </location>
    <ligand>
        <name>carbamoyl phosphate</name>
        <dbReference type="ChEBI" id="CHEBI:58228"/>
    </ligand>
</feature>
<feature type="binding site" evidence="2">
    <location>
        <position position="165"/>
    </location>
    <ligand>
        <name>L-ornithine</name>
        <dbReference type="ChEBI" id="CHEBI:46911"/>
    </ligand>
</feature>
<feature type="binding site" evidence="2">
    <location>
        <position position="225"/>
    </location>
    <ligand>
        <name>L-ornithine</name>
        <dbReference type="ChEBI" id="CHEBI:46911"/>
    </ligand>
</feature>
<feature type="binding site" evidence="2">
    <location>
        <begin position="229"/>
        <end position="230"/>
    </location>
    <ligand>
        <name>L-ornithine</name>
        <dbReference type="ChEBI" id="CHEBI:46911"/>
    </ligand>
</feature>
<feature type="binding site" evidence="2">
    <location>
        <begin position="266"/>
        <end position="267"/>
    </location>
    <ligand>
        <name>carbamoyl phosphate</name>
        <dbReference type="ChEBI" id="CHEBI:58228"/>
    </ligand>
</feature>
<feature type="binding site" evidence="2">
    <location>
        <position position="294"/>
    </location>
    <ligand>
        <name>carbamoyl phosphate</name>
        <dbReference type="ChEBI" id="CHEBI:58228"/>
    </ligand>
</feature>
<accession>A3PHL6</accession>